<evidence type="ECO:0000250" key="1"/>
<evidence type="ECO:0000255" key="2"/>
<evidence type="ECO:0000305" key="3"/>
<reference key="1">
    <citation type="journal article" date="2008" name="PLoS Genet.">
        <title>Genomic islands in the pathogenic filamentous fungus Aspergillus fumigatus.</title>
        <authorList>
            <person name="Fedorova N.D."/>
            <person name="Khaldi N."/>
            <person name="Joardar V.S."/>
            <person name="Maiti R."/>
            <person name="Amedeo P."/>
            <person name="Anderson M.J."/>
            <person name="Crabtree J."/>
            <person name="Silva J.C."/>
            <person name="Badger J.H."/>
            <person name="Albarraq A."/>
            <person name="Angiuoli S."/>
            <person name="Bussey H."/>
            <person name="Bowyer P."/>
            <person name="Cotty P.J."/>
            <person name="Dyer P.S."/>
            <person name="Egan A."/>
            <person name="Galens K."/>
            <person name="Fraser-Liggett C.M."/>
            <person name="Haas B.J."/>
            <person name="Inman J.M."/>
            <person name="Kent R."/>
            <person name="Lemieux S."/>
            <person name="Malavazi I."/>
            <person name="Orvis J."/>
            <person name="Roemer T."/>
            <person name="Ronning C.M."/>
            <person name="Sundaram J.P."/>
            <person name="Sutton G."/>
            <person name="Turner G."/>
            <person name="Venter J.C."/>
            <person name="White O.R."/>
            <person name="Whitty B.R."/>
            <person name="Youngman P."/>
            <person name="Wolfe K.H."/>
            <person name="Goldman G.H."/>
            <person name="Wortman J.R."/>
            <person name="Jiang B."/>
            <person name="Denning D.W."/>
            <person name="Nierman W.C."/>
        </authorList>
    </citation>
    <scope>NUCLEOTIDE SEQUENCE [LARGE SCALE GENOMIC DNA]</scope>
    <source>
        <strain>ATCC 1007 / CBS 513.65 / DSM 816 / NCTC 3887 / NRRL 1 / QM 1276 / 107</strain>
    </source>
</reference>
<feature type="signal peptide" evidence="2">
    <location>
        <begin position="1"/>
        <end position="23"/>
    </location>
</feature>
<feature type="chain" id="PRO_0000395234" description="Probable beta-galactosidase C">
    <location>
        <begin position="24"/>
        <end position="985"/>
    </location>
</feature>
<feature type="active site" description="Proton donor" evidence="2">
    <location>
        <position position="188"/>
    </location>
</feature>
<feature type="active site" description="Nucleophile" evidence="2">
    <location>
        <position position="287"/>
    </location>
</feature>
<feature type="binding site" evidence="1">
    <location>
        <position position="82"/>
    </location>
    <ligand>
        <name>substrate</name>
    </ligand>
</feature>
<feature type="binding site" evidence="1">
    <location>
        <position position="127"/>
    </location>
    <ligand>
        <name>substrate</name>
    </ligand>
</feature>
<feature type="binding site" evidence="1">
    <location>
        <position position="128"/>
    </location>
    <ligand>
        <name>substrate</name>
    </ligand>
</feature>
<feature type="binding site" evidence="1">
    <location>
        <position position="129"/>
    </location>
    <ligand>
        <name>substrate</name>
    </ligand>
</feature>
<feature type="binding site" evidence="1">
    <location>
        <position position="187"/>
    </location>
    <ligand>
        <name>substrate</name>
    </ligand>
</feature>
<feature type="binding site" evidence="1">
    <location>
        <position position="251"/>
    </location>
    <ligand>
        <name>substrate</name>
    </ligand>
</feature>
<feature type="binding site" evidence="1">
    <location>
        <position position="353"/>
    </location>
    <ligand>
        <name>substrate</name>
    </ligand>
</feature>
<feature type="glycosylation site" description="N-linked (GlcNAc...) asparagine" evidence="2">
    <location>
        <position position="276"/>
    </location>
</feature>
<feature type="glycosylation site" description="N-linked (GlcNAc...) asparagine" evidence="2">
    <location>
        <position position="391"/>
    </location>
</feature>
<feature type="glycosylation site" description="N-linked (GlcNAc...) asparagine" evidence="2">
    <location>
        <position position="434"/>
    </location>
</feature>
<feature type="glycosylation site" description="N-linked (GlcNAc...) asparagine" evidence="2">
    <location>
        <position position="517"/>
    </location>
</feature>
<feature type="glycosylation site" description="N-linked (GlcNAc...) asparagine" evidence="2">
    <location>
        <position position="602"/>
    </location>
</feature>
<feature type="glycosylation site" description="N-linked (GlcNAc...) asparagine" evidence="2">
    <location>
        <position position="677"/>
    </location>
</feature>
<feature type="glycosylation site" description="N-linked (GlcNAc...) asparagine" evidence="2">
    <location>
        <position position="715"/>
    </location>
</feature>
<feature type="glycosylation site" description="N-linked (GlcNAc...) asparagine" evidence="2">
    <location>
        <position position="720"/>
    </location>
</feature>
<feature type="glycosylation site" description="N-linked (GlcNAc...) asparagine" evidence="2">
    <location>
        <position position="759"/>
    </location>
</feature>
<feature type="disulfide bond" evidence="1">
    <location>
        <begin position="257"/>
        <end position="304"/>
    </location>
</feature>
<name>BGALC_ASPCL</name>
<sequence length="985" mass="108394">MRILSLLFLLLLGFLAGNRVVSATDHGKTTDVTWDRYSLSVKGERLFVFSGEFHYQRLPVPEMWLDVFQKLRANGFNAISVYFFWGYHSASEGEFDFETGAHNIQRLFDYAKEAGIYVIARAGPYCNAETTAGGYALWAANGQMGNERTSDDAYYAKWRPWILEVGKIIAANQITNGGPVILNQHENELQETSYEADNTLVVYMKQIARVFQEAGIVVPSSHNEKGMRAVSWSTDHHDVGGAVNIYGLDSYPGGLSCTNPSSGFNLVRTYYQWFQNSSYTQPEYLPEFEGGWFQPWGGHDYDTCATELSPEFADVYYKNNIGSRVTLQNIYMVFGGTNWGHSAAPVVYTSYDYSAPLRETREIRDKLKQTKLIGLFTRVSSDLLKTHMEGNGTGYTSDSSIYTWALHNPDTNAGFYVLAHKTSSSRSVTEFSLNVTTSAGAISIPDIQLDGRQSKIIVTDYQFGKSSALLYSSAEVLTYANLDVDVLVLYLNVGQKGLFVFKDERSKLSFQTYGNTNVTASVSSHGTQYIYTQAEGVTAVKFSNGVLAYLLDKESAWNFFAPPTTSNPQVAPDEHILVQGPYLVRGVTINHDTVEIIGDNANTTSLEVYAGNLRVKVVKWNGKAIKSRRTAYGSLVGRAPGAEDARISPPSLDSWSAQDTLPDIQPDYDDSRWTVCNKTASVNAVPLLSLPVLYSGDYGYHAGTKVYRGRFDGRNVTGANVTVQNGVASGWAAWLNGQFVGGVAGAIDLAVTSAVLSFNSSLLHDRDNVLTVVTDYTGHDQNSVRPKGTQNPRGILGATLIGGGKFTSWRIQGNAGGEKNIDPVRGPINEGGLYGERMGWHLPGYKAPRSAAKSSPLDGISGAEGRFYTTTFTLKLDRDLDVPIGLQLGAPAGTQAVVQVFMNGYQFGHYLPHIGPQSLFPFPPGVINNRGENTLAISMWALTDAGAKLDQVELVAYGKYRSGFDFNQDWGYLQPQWKDNRRQYA</sequence>
<dbReference type="EC" id="3.2.1.23"/>
<dbReference type="EMBL" id="DS027052">
    <property type="protein sequence ID" value="EAW11155.1"/>
    <property type="molecule type" value="Genomic_DNA"/>
</dbReference>
<dbReference type="RefSeq" id="XP_001272581.1">
    <property type="nucleotide sequence ID" value="XM_001272580.1"/>
</dbReference>
<dbReference type="SMR" id="A1CE56"/>
<dbReference type="STRING" id="344612.A1CE56"/>
<dbReference type="GlyCosmos" id="A1CE56">
    <property type="glycosylation" value="9 sites, No reported glycans"/>
</dbReference>
<dbReference type="EnsemblFungi" id="EAW11155">
    <property type="protein sequence ID" value="EAW11155"/>
    <property type="gene ID" value="ACLA_088440"/>
</dbReference>
<dbReference type="GeneID" id="4704994"/>
<dbReference type="KEGG" id="act:ACLA_088440"/>
<dbReference type="VEuPathDB" id="FungiDB:ACLA_088440"/>
<dbReference type="eggNOG" id="KOG0496">
    <property type="taxonomic scope" value="Eukaryota"/>
</dbReference>
<dbReference type="HOGENOM" id="CLU_005732_2_1_1"/>
<dbReference type="OMA" id="PEFEGGW"/>
<dbReference type="OrthoDB" id="1657402at2759"/>
<dbReference type="Proteomes" id="UP000006701">
    <property type="component" value="Unassembled WGS sequence"/>
</dbReference>
<dbReference type="GO" id="GO:0005576">
    <property type="term" value="C:extracellular region"/>
    <property type="evidence" value="ECO:0007669"/>
    <property type="project" value="UniProtKB-SubCell"/>
</dbReference>
<dbReference type="GO" id="GO:0004565">
    <property type="term" value="F:beta-galactosidase activity"/>
    <property type="evidence" value="ECO:0007669"/>
    <property type="project" value="UniProtKB-EC"/>
</dbReference>
<dbReference type="GO" id="GO:0000272">
    <property type="term" value="P:polysaccharide catabolic process"/>
    <property type="evidence" value="ECO:0007669"/>
    <property type="project" value="UniProtKB-KW"/>
</dbReference>
<dbReference type="FunFam" id="2.102.20.10:FF:000001">
    <property type="entry name" value="Beta-galactosidase A"/>
    <property type="match status" value="1"/>
</dbReference>
<dbReference type="FunFam" id="2.60.120.260:FF:000065">
    <property type="entry name" value="Beta-galactosidase A"/>
    <property type="match status" value="1"/>
</dbReference>
<dbReference type="FunFam" id="3.20.20.80:FF:000040">
    <property type="entry name" value="Beta-galactosidase A"/>
    <property type="match status" value="1"/>
</dbReference>
<dbReference type="FunFam" id="2.60.120.260:FF:000144">
    <property type="entry name" value="Probable beta-galactosidase C"/>
    <property type="match status" value="1"/>
</dbReference>
<dbReference type="Gene3D" id="2.102.20.10">
    <property type="entry name" value="Beta-galactosidase, domain 2"/>
    <property type="match status" value="1"/>
</dbReference>
<dbReference type="Gene3D" id="2.60.390.10">
    <property type="entry name" value="Beta-galactosidase, domain 3"/>
    <property type="match status" value="1"/>
</dbReference>
<dbReference type="Gene3D" id="2.60.120.260">
    <property type="entry name" value="Galactose-binding domain-like"/>
    <property type="match status" value="2"/>
</dbReference>
<dbReference type="Gene3D" id="3.20.20.80">
    <property type="entry name" value="Glycosidases"/>
    <property type="match status" value="1"/>
</dbReference>
<dbReference type="InterPro" id="IPR018954">
    <property type="entry name" value="Betagal_dom2"/>
</dbReference>
<dbReference type="InterPro" id="IPR037110">
    <property type="entry name" value="Betagal_dom2_sf"/>
</dbReference>
<dbReference type="InterPro" id="IPR025972">
    <property type="entry name" value="BetaGal_dom3"/>
</dbReference>
<dbReference type="InterPro" id="IPR036833">
    <property type="entry name" value="BetaGal_dom3_sf"/>
</dbReference>
<dbReference type="InterPro" id="IPR025300">
    <property type="entry name" value="BetaGal_jelly_roll_dom"/>
</dbReference>
<dbReference type="InterPro" id="IPR008979">
    <property type="entry name" value="Galactose-bd-like_sf"/>
</dbReference>
<dbReference type="InterPro" id="IPR031330">
    <property type="entry name" value="Gly_Hdrlase_35_cat"/>
</dbReference>
<dbReference type="InterPro" id="IPR001944">
    <property type="entry name" value="Glycoside_Hdrlase_35"/>
</dbReference>
<dbReference type="InterPro" id="IPR017853">
    <property type="entry name" value="Glycoside_hydrolase_SF"/>
</dbReference>
<dbReference type="PANTHER" id="PTHR23421">
    <property type="entry name" value="BETA-GALACTOSIDASE RELATED"/>
    <property type="match status" value="1"/>
</dbReference>
<dbReference type="Pfam" id="PF13364">
    <property type="entry name" value="BetaGal_ABD2"/>
    <property type="match status" value="2"/>
</dbReference>
<dbReference type="Pfam" id="PF10435">
    <property type="entry name" value="BetaGal_dom2"/>
    <property type="match status" value="1"/>
</dbReference>
<dbReference type="Pfam" id="PF13363">
    <property type="entry name" value="BetaGal_dom3"/>
    <property type="match status" value="1"/>
</dbReference>
<dbReference type="Pfam" id="PF01301">
    <property type="entry name" value="Glyco_hydro_35"/>
    <property type="match status" value="1"/>
</dbReference>
<dbReference type="PRINTS" id="PR00742">
    <property type="entry name" value="GLHYDRLASE35"/>
</dbReference>
<dbReference type="SMART" id="SM01029">
    <property type="entry name" value="BetaGal_dom2"/>
    <property type="match status" value="1"/>
</dbReference>
<dbReference type="SUPFAM" id="SSF51445">
    <property type="entry name" value="(Trans)glycosidases"/>
    <property type="match status" value="1"/>
</dbReference>
<dbReference type="SUPFAM" id="SSF117100">
    <property type="entry name" value="Beta-galactosidase LacA, domain 3"/>
    <property type="match status" value="1"/>
</dbReference>
<dbReference type="SUPFAM" id="SSF49785">
    <property type="entry name" value="Galactose-binding domain-like"/>
    <property type="match status" value="2"/>
</dbReference>
<dbReference type="SUPFAM" id="SSF51011">
    <property type="entry name" value="Glycosyl hydrolase domain"/>
    <property type="match status" value="1"/>
</dbReference>
<protein>
    <recommendedName>
        <fullName>Probable beta-galactosidase C</fullName>
        <ecNumber>3.2.1.23</ecNumber>
    </recommendedName>
    <alternativeName>
        <fullName>Lactase C</fullName>
    </alternativeName>
</protein>
<organism>
    <name type="scientific">Aspergillus clavatus (strain ATCC 1007 / CBS 513.65 / DSM 816 / NCTC 3887 / NRRL 1 / QM 1276 / 107)</name>
    <dbReference type="NCBI Taxonomy" id="344612"/>
    <lineage>
        <taxon>Eukaryota</taxon>
        <taxon>Fungi</taxon>
        <taxon>Dikarya</taxon>
        <taxon>Ascomycota</taxon>
        <taxon>Pezizomycotina</taxon>
        <taxon>Eurotiomycetes</taxon>
        <taxon>Eurotiomycetidae</taxon>
        <taxon>Eurotiales</taxon>
        <taxon>Aspergillaceae</taxon>
        <taxon>Aspergillus</taxon>
        <taxon>Aspergillus subgen. Fumigati</taxon>
    </lineage>
</organism>
<comment type="function">
    <text evidence="1">Cleaves beta-linked terminal galactosyl residues from gangliosides, glycoproteins, and glycosaminoglycans.</text>
</comment>
<comment type="catalytic activity">
    <reaction>
        <text>Hydrolysis of terminal non-reducing beta-D-galactose residues in beta-D-galactosides.</text>
        <dbReference type="EC" id="3.2.1.23"/>
    </reaction>
</comment>
<comment type="subcellular location">
    <subcellularLocation>
        <location evidence="1">Secreted</location>
    </subcellularLocation>
</comment>
<comment type="similarity">
    <text evidence="3">Belongs to the glycosyl hydrolase 35 family.</text>
</comment>
<keyword id="KW-0119">Carbohydrate metabolism</keyword>
<keyword id="KW-1015">Disulfide bond</keyword>
<keyword id="KW-0325">Glycoprotein</keyword>
<keyword id="KW-0326">Glycosidase</keyword>
<keyword id="KW-0378">Hydrolase</keyword>
<keyword id="KW-0624">Polysaccharide degradation</keyword>
<keyword id="KW-1185">Reference proteome</keyword>
<keyword id="KW-0964">Secreted</keyword>
<keyword id="KW-0732">Signal</keyword>
<accession>A1CE56</accession>
<proteinExistence type="inferred from homology"/>
<gene>
    <name type="primary">lacC</name>
    <name type="ORF">ACLA_088440</name>
</gene>